<comment type="function">
    <text evidence="5 6 13">Binds to phospholipid vesicles in a calcium-dependent manner in vitro (PubMed:16331990, PubMed:18441010). Prefers phosphatidyl-serine containing membranes. May have a role in the membrane cytoskeleton scaffolding or exocytotic processes (PubMed:16331990). May be involved in oxidative stress response (Probable).</text>
</comment>
<comment type="subunit">
    <text evidence="3 4">Monomer (PubMed:12142457, PubMed:12787021). Trimer. Oligomerization is calcium-independent. Disassembly of the oligomers seems to be required for calcium-binding (PubMed:12787021).</text>
</comment>
<comment type="subcellular location">
    <subcellularLocation>
        <location evidence="14 15">Membrane</location>
    </subcellularLocation>
</comment>
<comment type="domain">
    <text evidence="2">A pair of annexin repeats may form one binding site for calcium and phospholipid.</text>
</comment>
<comment type="similarity">
    <text evidence="1 2">Belongs to the annexin family.</text>
</comment>
<proteinExistence type="evidence at protein level"/>
<accession>P93157</accession>
<evidence type="ECO:0000255" key="1">
    <source>
        <dbReference type="PROSITE-ProRule" id="PRU01245"/>
    </source>
</evidence>
<evidence type="ECO:0000255" key="2">
    <source>
        <dbReference type="RuleBase" id="RU003540"/>
    </source>
</evidence>
<evidence type="ECO:0000269" key="3">
    <source>
    </source>
</evidence>
<evidence type="ECO:0000269" key="4">
    <source>
    </source>
</evidence>
<evidence type="ECO:0000269" key="5">
    <source>
    </source>
</evidence>
<evidence type="ECO:0000269" key="6">
    <source>
    </source>
</evidence>
<evidence type="ECO:0000303" key="7">
    <source>
    </source>
</evidence>
<evidence type="ECO:0000303" key="8">
    <source>
    </source>
</evidence>
<evidence type="ECO:0000303" key="9">
    <source>
    </source>
</evidence>
<evidence type="ECO:0000303" key="10">
    <source>
    </source>
</evidence>
<evidence type="ECO:0000303" key="11">
    <source>
    </source>
</evidence>
<evidence type="ECO:0000303" key="12">
    <source ref="1"/>
</evidence>
<evidence type="ECO:0000305" key="13">
    <source>
    </source>
</evidence>
<evidence type="ECO:0000305" key="14">
    <source>
    </source>
</evidence>
<evidence type="ECO:0000305" key="15">
    <source>
    </source>
</evidence>
<evidence type="ECO:0000312" key="16">
    <source>
        <dbReference type="EMBL" id="AAB67993.2"/>
    </source>
</evidence>
<evidence type="ECO:0007744" key="17">
    <source>
        <dbReference type="PDB" id="1N00"/>
    </source>
</evidence>
<evidence type="ECO:0007744" key="18">
    <source>
        <dbReference type="PDB" id="3BRX"/>
    </source>
</evidence>
<evidence type="ECO:0007829" key="19">
    <source>
        <dbReference type="PDB" id="1N00"/>
    </source>
</evidence>
<evidence type="ECO:0007829" key="20">
    <source>
        <dbReference type="PDB" id="3BRX"/>
    </source>
</evidence>
<sequence>ATLTVPTTVPSVSEDCEQLRKAFSGWGTNEGLIIDILGHRNAEQRNLIRKTYAETYGEDLLKALDKELSNDFERLVLLWALDPAERDALLANEATKRWTSSNQVLMEIACTRSANQLLHARQAYHARYKKSLEEDVAHHTTGDFHKLLLPLVSSYRYEGEEVNMTLAKTEAKLLHEKISNKAYSDDDVIRVLATRSKAQINATLNHYKNEYGNDINKDLKADPKDEFLALLRSTVKCLVYPEKYFEKVLRLAINRRGTDEGALTRVVCTRAEVDLKVIADEYQRRNSVPLTRAIVKDTHGDYEKLLLVLAGHVEN</sequence>
<keyword id="KW-0002">3D-structure</keyword>
<keyword id="KW-0041">Annexin</keyword>
<keyword id="KW-0106">Calcium</keyword>
<keyword id="KW-0111">Calcium/phospholipid-binding</keyword>
<keyword id="KW-0472">Membrane</keyword>
<keyword id="KW-0479">Metal-binding</keyword>
<keyword id="KW-1185">Reference proteome</keyword>
<keyword id="KW-0677">Repeat</keyword>
<protein>
    <recommendedName>
        <fullName evidence="8 9 10">Annexin Gh1</fullName>
        <shortName evidence="7 8">Anx(Gh1)</shortName>
    </recommendedName>
</protein>
<gene>
    <name evidence="11 16" type="primary">AnnGh1</name>
</gene>
<reference key="1">
    <citation type="journal article" date="1997" name="Plant Physiol.">
        <title>cDNA Clones for Annexin AnnGh1 (Accession No. U73746) and AnnGh2 (Accession No. U73747) from Gossypium hirsutum (cotton)1 (PGR97-003).</title>
        <authorList>
            <person name="Potikha T.S."/>
            <person name="Delmer D.P."/>
        </authorList>
    </citation>
    <scope>NUCLEOTIDE SEQUENCE [MRNA]</scope>
    <source>
        <strain evidence="12">cv. Acala SJ2</strain>
        <tissue evidence="12">Fiber</tissue>
    </source>
</reference>
<reference evidence="16" key="2">
    <citation type="journal article" date="1997" name="Cell. Mol. Life Sci.">
        <title>Structures and functions of annexins in plants.</title>
        <authorList>
            <person name="Delmer D.P."/>
            <person name="Potikha T.S."/>
        </authorList>
    </citation>
    <scope>GENE NAME</scope>
</reference>
<reference key="3">
    <citation type="journal article" date="2002" name="Protein Sci.">
        <title>Plant annexins form calcium-independent oligomers in solution.</title>
        <authorList>
            <person name="Hofmann A."/>
            <person name="Ruvinov S."/>
            <person name="Hess S."/>
            <person name="Schantz R."/>
            <person name="Delmer D.P."/>
            <person name="Wlodawer A."/>
        </authorList>
    </citation>
    <scope>SUBUNIT</scope>
</reference>
<reference key="4">
    <citation type="journal article" date="2005" name="Biochemistry">
        <title>Structural determinants for plant annexin-membrane interactions.</title>
        <authorList>
            <person name="Dabitz N."/>
            <person name="Hu N.J."/>
            <person name="Yusof A.M."/>
            <person name="Tranter N."/>
            <person name="Winter A."/>
            <person name="Daley M."/>
            <person name="Zschoernig O."/>
            <person name="Brisson A."/>
            <person name="Hofmann A."/>
        </authorList>
    </citation>
    <scope>FUNCTION</scope>
</reference>
<reference evidence="17" key="5">
    <citation type="journal article" date="2003" name="Eur. J. Biochem.">
        <title>The crystal structure of annexin Gh1 from Gossypium hirsutum reveals an unusual S3 cluster.</title>
        <authorList>
            <person name="Hofmann A."/>
            <person name="Delmer D.P."/>
            <person name="Wlodawer A."/>
        </authorList>
    </citation>
    <scope>X-RAY CRYSTALLOGRAPHY (2.10 ANGSTROMS)</scope>
    <scope>SUBUNIT</scope>
</reference>
<reference evidence="18" key="6">
    <citation type="journal article" date="2008" name="J. Biol. Chem.">
        <title>The crystal structure of calcium-bound annexin Gh1 from Gossypium hirsutum and its implications for membrane binding mechanisms of plant annexins.</title>
        <authorList>
            <person name="Hu N.J."/>
            <person name="Yusof A.M."/>
            <person name="Winter A."/>
            <person name="Osman A."/>
            <person name="Reeve A.K."/>
            <person name="Hofmann A."/>
        </authorList>
    </citation>
    <scope>X-RAY CRYSTALLOGRAPHY (2.50 ANGSTROMS) IN COMPLEX WITH CALCIUM</scope>
    <scope>FUNCTION</scope>
    <scope>CIRCULAR DICHROISM ANALYSIS</scope>
</reference>
<feature type="chain" id="PRO_0000450599" description="Annexin Gh1">
    <location>
        <begin position="1" status="less than"/>
        <end position="315"/>
    </location>
</feature>
<feature type="repeat" description="Annexin 1" evidence="1">
    <location>
        <begin position="10"/>
        <end position="81"/>
    </location>
</feature>
<feature type="repeat" description="Annexin 2" evidence="1">
    <location>
        <begin position="82"/>
        <end position="153"/>
    </location>
</feature>
<feature type="repeat" description="Annexin 3" evidence="1">
    <location>
        <begin position="165"/>
        <end position="236"/>
    </location>
</feature>
<feature type="repeat" description="Annexin 4" evidence="1">
    <location>
        <begin position="240"/>
        <end position="311"/>
    </location>
</feature>
<feature type="binding site" evidence="6 18">
    <location>
        <position position="23"/>
    </location>
    <ligand>
        <name>Ca(2+)</name>
        <dbReference type="ChEBI" id="CHEBI:29108"/>
        <label>1</label>
    </ligand>
</feature>
<feature type="binding site" evidence="6 18">
    <location>
        <position position="25"/>
    </location>
    <ligand>
        <name>Ca(2+)</name>
        <dbReference type="ChEBI" id="CHEBI:29108"/>
        <label>1</label>
    </ligand>
</feature>
<feature type="binding site" evidence="6 18">
    <location>
        <position position="27"/>
    </location>
    <ligand>
        <name>Ca(2+)</name>
        <dbReference type="ChEBI" id="CHEBI:29108"/>
        <label>1</label>
    </ligand>
</feature>
<feature type="binding site" evidence="6 18">
    <location>
        <position position="67"/>
    </location>
    <ligand>
        <name>Ca(2+)</name>
        <dbReference type="ChEBI" id="CHEBI:29108"/>
        <label>1</label>
    </ligand>
</feature>
<feature type="binding site" evidence="6 18">
    <location>
        <position position="253"/>
    </location>
    <ligand>
        <name>Ca(2+)</name>
        <dbReference type="ChEBI" id="CHEBI:29108"/>
        <label>2</label>
    </ligand>
</feature>
<feature type="binding site" evidence="6 18">
    <location>
        <position position="255"/>
    </location>
    <ligand>
        <name>Ca(2+)</name>
        <dbReference type="ChEBI" id="CHEBI:29108"/>
        <label>2</label>
    </ligand>
</feature>
<feature type="binding site" evidence="6 18">
    <location>
        <position position="257"/>
    </location>
    <ligand>
        <name>Ca(2+)</name>
        <dbReference type="ChEBI" id="CHEBI:29108"/>
        <label>2</label>
    </ligand>
</feature>
<feature type="binding site" evidence="6 18">
    <location>
        <position position="295"/>
    </location>
    <ligand>
        <name>Ca(2+)</name>
        <dbReference type="ChEBI" id="CHEBI:29108"/>
        <label>3</label>
    </ligand>
</feature>
<feature type="binding site" evidence="6 18">
    <location>
        <position position="297"/>
    </location>
    <ligand>
        <name>Ca(2+)</name>
        <dbReference type="ChEBI" id="CHEBI:29108"/>
        <label>2</label>
    </ligand>
</feature>
<feature type="binding site" evidence="6 18">
    <location>
        <position position="298"/>
    </location>
    <ligand>
        <name>Ca(2+)</name>
        <dbReference type="ChEBI" id="CHEBI:29108"/>
        <label>3</label>
    </ligand>
</feature>
<feature type="binding site" evidence="6 18">
    <location>
        <position position="303"/>
    </location>
    <ligand>
        <name>Ca(2+)</name>
        <dbReference type="ChEBI" id="CHEBI:29108"/>
        <label>3</label>
    </ligand>
</feature>
<feature type="non-terminal residue" evidence="16">
    <location>
        <position position="1"/>
    </location>
</feature>
<feature type="helix" evidence="19">
    <location>
        <begin position="12"/>
        <end position="22"/>
    </location>
</feature>
<feature type="strand" evidence="19">
    <location>
        <begin position="24"/>
        <end position="27"/>
    </location>
</feature>
<feature type="helix" evidence="19">
    <location>
        <begin position="30"/>
        <end position="37"/>
    </location>
</feature>
<feature type="helix" evidence="19">
    <location>
        <begin position="42"/>
        <end position="56"/>
    </location>
</feature>
<feature type="helix" evidence="19">
    <location>
        <begin position="60"/>
        <end position="67"/>
    </location>
</feature>
<feature type="helix" evidence="19">
    <location>
        <begin position="70"/>
        <end position="80"/>
    </location>
</feature>
<feature type="helix" evidence="19">
    <location>
        <begin position="83"/>
        <end position="95"/>
    </location>
</feature>
<feature type="strand" evidence="19">
    <location>
        <begin position="96"/>
        <end position="98"/>
    </location>
</feature>
<feature type="helix" evidence="19">
    <location>
        <begin position="103"/>
        <end position="110"/>
    </location>
</feature>
<feature type="helix" evidence="19">
    <location>
        <begin position="114"/>
        <end position="128"/>
    </location>
</feature>
<feature type="helix" evidence="19">
    <location>
        <begin position="132"/>
        <end position="139"/>
    </location>
</feature>
<feature type="helix" evidence="19">
    <location>
        <begin position="142"/>
        <end position="153"/>
    </location>
</feature>
<feature type="helix" evidence="19">
    <location>
        <begin position="164"/>
        <end position="179"/>
    </location>
</feature>
<feature type="helix" evidence="19">
    <location>
        <begin position="186"/>
        <end position="194"/>
    </location>
</feature>
<feature type="helix" evidence="19">
    <location>
        <begin position="197"/>
        <end position="211"/>
    </location>
</feature>
<feature type="helix" evidence="19">
    <location>
        <begin position="217"/>
        <end position="219"/>
    </location>
</feature>
<feature type="helix" evidence="19">
    <location>
        <begin position="226"/>
        <end position="239"/>
    </location>
</feature>
<feature type="helix" evidence="19">
    <location>
        <begin position="241"/>
        <end position="253"/>
    </location>
</feature>
<feature type="strand" evidence="20">
    <location>
        <begin position="254"/>
        <end position="257"/>
    </location>
</feature>
<feature type="helix" evidence="19">
    <location>
        <begin position="262"/>
        <end position="270"/>
    </location>
</feature>
<feature type="turn" evidence="19">
    <location>
        <begin position="271"/>
        <end position="274"/>
    </location>
</feature>
<feature type="helix" evidence="19">
    <location>
        <begin position="275"/>
        <end position="286"/>
    </location>
</feature>
<feature type="helix" evidence="19">
    <location>
        <begin position="290"/>
        <end position="293"/>
    </location>
</feature>
<feature type="turn" evidence="19">
    <location>
        <begin position="294"/>
        <end position="297"/>
    </location>
</feature>
<feature type="helix" evidence="19">
    <location>
        <begin position="300"/>
        <end position="309"/>
    </location>
</feature>
<organism evidence="16">
    <name type="scientific">Gossypium hirsutum</name>
    <name type="common">Upland cotton</name>
    <name type="synonym">Gossypium mexicanum</name>
    <dbReference type="NCBI Taxonomy" id="3635"/>
    <lineage>
        <taxon>Eukaryota</taxon>
        <taxon>Viridiplantae</taxon>
        <taxon>Streptophyta</taxon>
        <taxon>Embryophyta</taxon>
        <taxon>Tracheophyta</taxon>
        <taxon>Spermatophyta</taxon>
        <taxon>Magnoliopsida</taxon>
        <taxon>eudicotyledons</taxon>
        <taxon>Gunneridae</taxon>
        <taxon>Pentapetalae</taxon>
        <taxon>rosids</taxon>
        <taxon>malvids</taxon>
        <taxon>Malvales</taxon>
        <taxon>Malvaceae</taxon>
        <taxon>Malvoideae</taxon>
        <taxon>Gossypium</taxon>
    </lineage>
</organism>
<dbReference type="EMBL" id="U73746">
    <property type="protein sequence ID" value="AAB67993.2"/>
    <property type="molecule type" value="mRNA"/>
</dbReference>
<dbReference type="PIR" id="T10805">
    <property type="entry name" value="T10805"/>
</dbReference>
<dbReference type="PDB" id="1N00">
    <property type="method" value="X-ray"/>
    <property type="resolution" value="2.10 A"/>
    <property type="chains" value="A=1-315"/>
</dbReference>
<dbReference type="PDB" id="3BRX">
    <property type="method" value="X-ray"/>
    <property type="resolution" value="2.50 A"/>
    <property type="chains" value="A=1-315"/>
</dbReference>
<dbReference type="PDBsum" id="1N00"/>
<dbReference type="PDBsum" id="3BRX"/>
<dbReference type="SMR" id="P93157"/>
<dbReference type="EvolutionaryTrace" id="P93157"/>
<dbReference type="Proteomes" id="UP000189702">
    <property type="component" value="Unplaced"/>
</dbReference>
<dbReference type="GO" id="GO:0005737">
    <property type="term" value="C:cytoplasm"/>
    <property type="evidence" value="ECO:0000318"/>
    <property type="project" value="GO_Central"/>
</dbReference>
<dbReference type="GO" id="GO:0070382">
    <property type="term" value="C:exocytic vesicle"/>
    <property type="evidence" value="ECO:0000305"/>
    <property type="project" value="UniProtKB"/>
</dbReference>
<dbReference type="GO" id="GO:0016020">
    <property type="term" value="C:membrane"/>
    <property type="evidence" value="ECO:0000314"/>
    <property type="project" value="UniProtKB"/>
</dbReference>
<dbReference type="GO" id="GO:0005886">
    <property type="term" value="C:plasma membrane"/>
    <property type="evidence" value="ECO:0000318"/>
    <property type="project" value="GO_Central"/>
</dbReference>
<dbReference type="GO" id="GO:0005509">
    <property type="term" value="F:calcium ion binding"/>
    <property type="evidence" value="ECO:0000314"/>
    <property type="project" value="AgBase"/>
</dbReference>
<dbReference type="GO" id="GO:0005544">
    <property type="term" value="F:calcium-dependent phospholipid binding"/>
    <property type="evidence" value="ECO:0000314"/>
    <property type="project" value="UniProtKB"/>
</dbReference>
<dbReference type="GO" id="GO:0001786">
    <property type="term" value="F:phosphatidylserine binding"/>
    <property type="evidence" value="ECO:0000314"/>
    <property type="project" value="UniProtKB"/>
</dbReference>
<dbReference type="GO" id="GO:0017156">
    <property type="term" value="P:calcium-ion regulated exocytosis"/>
    <property type="evidence" value="ECO:0000305"/>
    <property type="project" value="UniProtKB"/>
</dbReference>
<dbReference type="GO" id="GO:0009835">
    <property type="term" value="P:fruit ripening"/>
    <property type="evidence" value="ECO:0000304"/>
    <property type="project" value="AgBase"/>
</dbReference>
<dbReference type="GO" id="GO:0070206">
    <property type="term" value="P:protein trimerization"/>
    <property type="evidence" value="ECO:0000314"/>
    <property type="project" value="UniProtKB"/>
</dbReference>
<dbReference type="GO" id="GO:2001006">
    <property type="term" value="P:regulation of cellulose biosynthetic process"/>
    <property type="evidence" value="ECO:0000304"/>
    <property type="project" value="AgBase"/>
</dbReference>
<dbReference type="GO" id="GO:0009409">
    <property type="term" value="P:response to cold"/>
    <property type="evidence" value="ECO:0000318"/>
    <property type="project" value="GO_Central"/>
</dbReference>
<dbReference type="GO" id="GO:0009408">
    <property type="term" value="P:response to heat"/>
    <property type="evidence" value="ECO:0000318"/>
    <property type="project" value="GO_Central"/>
</dbReference>
<dbReference type="GO" id="GO:0006979">
    <property type="term" value="P:response to oxidative stress"/>
    <property type="evidence" value="ECO:0000304"/>
    <property type="project" value="AgBase"/>
</dbReference>
<dbReference type="GO" id="GO:0009651">
    <property type="term" value="P:response to salt stress"/>
    <property type="evidence" value="ECO:0000318"/>
    <property type="project" value="GO_Central"/>
</dbReference>
<dbReference type="GO" id="GO:0009414">
    <property type="term" value="P:response to water deprivation"/>
    <property type="evidence" value="ECO:0000318"/>
    <property type="project" value="GO_Central"/>
</dbReference>
<dbReference type="GO" id="GO:0032940">
    <property type="term" value="P:secretion by cell"/>
    <property type="evidence" value="ECO:0000304"/>
    <property type="project" value="AgBase"/>
</dbReference>
<dbReference type="FunFam" id="1.10.220.10:FF:000001">
    <property type="entry name" value="Annexin"/>
    <property type="match status" value="1"/>
</dbReference>
<dbReference type="FunFam" id="1.10.220.10:FF:000006">
    <property type="entry name" value="Annexin"/>
    <property type="match status" value="1"/>
</dbReference>
<dbReference type="FunFam" id="1.10.220.10:FF:000008">
    <property type="entry name" value="Annexin"/>
    <property type="match status" value="1"/>
</dbReference>
<dbReference type="FunFam" id="1.10.220.10:FF:000009">
    <property type="entry name" value="Annexin"/>
    <property type="match status" value="1"/>
</dbReference>
<dbReference type="Gene3D" id="1.10.220.10">
    <property type="entry name" value="Annexin"/>
    <property type="match status" value="4"/>
</dbReference>
<dbReference type="InterPro" id="IPR001464">
    <property type="entry name" value="Annexin"/>
</dbReference>
<dbReference type="InterPro" id="IPR018502">
    <property type="entry name" value="Annexin_repeat"/>
</dbReference>
<dbReference type="InterPro" id="IPR018252">
    <property type="entry name" value="Annexin_repeat_CS"/>
</dbReference>
<dbReference type="InterPro" id="IPR037104">
    <property type="entry name" value="Annexin_sf"/>
</dbReference>
<dbReference type="InterPro" id="IPR009118">
    <property type="entry name" value="AnnexinD_plant"/>
</dbReference>
<dbReference type="PANTHER" id="PTHR10502">
    <property type="entry name" value="ANNEXIN"/>
    <property type="match status" value="1"/>
</dbReference>
<dbReference type="PANTHER" id="PTHR10502:SF104">
    <property type="entry name" value="ANNEXIN D1"/>
    <property type="match status" value="1"/>
</dbReference>
<dbReference type="Pfam" id="PF00191">
    <property type="entry name" value="Annexin"/>
    <property type="match status" value="4"/>
</dbReference>
<dbReference type="PRINTS" id="PR00196">
    <property type="entry name" value="ANNEXIN"/>
</dbReference>
<dbReference type="PRINTS" id="PR01814">
    <property type="entry name" value="ANNEXINPLANT"/>
</dbReference>
<dbReference type="SMART" id="SM00335">
    <property type="entry name" value="ANX"/>
    <property type="match status" value="4"/>
</dbReference>
<dbReference type="SUPFAM" id="SSF47874">
    <property type="entry name" value="Annexin"/>
    <property type="match status" value="1"/>
</dbReference>
<dbReference type="PROSITE" id="PS00223">
    <property type="entry name" value="ANNEXIN_1"/>
    <property type="match status" value="1"/>
</dbReference>
<dbReference type="PROSITE" id="PS51897">
    <property type="entry name" value="ANNEXIN_2"/>
    <property type="match status" value="4"/>
</dbReference>
<name>ANX1_GOSHI</name>